<name>INS_CAMDR</name>
<protein>
    <recommendedName>
        <fullName>Insulin</fullName>
    </recommendedName>
    <component>
        <recommendedName>
            <fullName>Insulin B chain</fullName>
        </recommendedName>
    </component>
    <component>
        <recommendedName>
            <fullName>Insulin A chain</fullName>
        </recommendedName>
    </component>
</protein>
<sequence length="51" mass="5694">FANQHLCGSHLVEALYLVCGERGFFYTPKAGIVEQCCASVCSLYQLENYCN</sequence>
<accession>P01320</accession>
<keyword id="KW-0119">Carbohydrate metabolism</keyword>
<keyword id="KW-0903">Direct protein sequencing</keyword>
<keyword id="KW-1015">Disulfide bond</keyword>
<keyword id="KW-0313">Glucose metabolism</keyword>
<keyword id="KW-0372">Hormone</keyword>
<keyword id="KW-0964">Secreted</keyword>
<comment type="function">
    <text>Insulin decreases blood glucose concentration. It increases cell permeability to monosaccharides, amino acids and fatty acids. It accelerates glycolysis, the pentose phosphate cycle, and glycogen synthesis in liver.</text>
</comment>
<comment type="subunit">
    <text>Heterodimer of a B chain and an A chain linked by two disulfide bonds.</text>
</comment>
<comment type="subcellular location">
    <subcellularLocation>
        <location>Secreted</location>
    </subcellularLocation>
</comment>
<comment type="similarity">
    <text evidence="1">Belongs to the insulin family.</text>
</comment>
<reference key="1">
    <citation type="journal article" date="1972" name="J. Fac. Med. Baghdad">
        <title>The isolation and characterization of insulin of camel (Camelus dromedarius).</title>
        <authorList>
            <person name="Danho W.O."/>
        </authorList>
    </citation>
    <scope>PROTEIN SEQUENCE</scope>
</reference>
<gene>
    <name type="primary">INS</name>
</gene>
<organism>
    <name type="scientific">Camelus dromedarius</name>
    <name type="common">Dromedary</name>
    <name type="synonym">Arabian camel</name>
    <dbReference type="NCBI Taxonomy" id="9838"/>
    <lineage>
        <taxon>Eukaryota</taxon>
        <taxon>Metazoa</taxon>
        <taxon>Chordata</taxon>
        <taxon>Craniata</taxon>
        <taxon>Vertebrata</taxon>
        <taxon>Euteleostomi</taxon>
        <taxon>Mammalia</taxon>
        <taxon>Eutheria</taxon>
        <taxon>Laurasiatheria</taxon>
        <taxon>Artiodactyla</taxon>
        <taxon>Tylopoda</taxon>
        <taxon>Camelidae</taxon>
        <taxon>Camelus</taxon>
    </lineage>
</organism>
<feature type="peptide" id="PRO_0000015775" description="Insulin B chain">
    <location>
        <begin position="1"/>
        <end position="30"/>
    </location>
</feature>
<feature type="peptide" id="PRO_0000015776" description="Insulin A chain">
    <location>
        <begin position="31"/>
        <end position="51"/>
    </location>
</feature>
<feature type="disulfide bond" description="Interchain (between B and A chains)">
    <location>
        <begin position="7"/>
        <end position="37"/>
    </location>
</feature>
<feature type="disulfide bond" description="Interchain (between B and A chains)">
    <location>
        <begin position="19"/>
        <end position="50"/>
    </location>
</feature>
<feature type="disulfide bond">
    <location>
        <begin position="36"/>
        <end position="41"/>
    </location>
</feature>
<feature type="non-consecutive residues" evidence="1">
    <location>
        <begin position="30"/>
        <end position="31"/>
    </location>
</feature>
<dbReference type="PIR" id="A92782">
    <property type="entry name" value="INCMA"/>
</dbReference>
<dbReference type="BMRB" id="P01320"/>
<dbReference type="SMR" id="P01320"/>
<dbReference type="STRING" id="9838.ENSCDRP00005030700"/>
<dbReference type="GO" id="GO:0005615">
    <property type="term" value="C:extracellular space"/>
    <property type="evidence" value="ECO:0007669"/>
    <property type="project" value="TreeGrafter"/>
</dbReference>
<dbReference type="GO" id="GO:0005179">
    <property type="term" value="F:hormone activity"/>
    <property type="evidence" value="ECO:0007669"/>
    <property type="project" value="UniProtKB-KW"/>
</dbReference>
<dbReference type="GO" id="GO:1901701">
    <property type="term" value="P:cellular response to oxygen-containing compound"/>
    <property type="evidence" value="ECO:0007669"/>
    <property type="project" value="UniProtKB-ARBA"/>
</dbReference>
<dbReference type="GO" id="GO:0006006">
    <property type="term" value="P:glucose metabolic process"/>
    <property type="evidence" value="ECO:0007669"/>
    <property type="project" value="UniProtKB-KW"/>
</dbReference>
<dbReference type="CDD" id="cd04367">
    <property type="entry name" value="IlGF_insulin_like"/>
    <property type="match status" value="1"/>
</dbReference>
<dbReference type="Gene3D" id="1.10.100.10">
    <property type="entry name" value="Insulin-like"/>
    <property type="match status" value="2"/>
</dbReference>
<dbReference type="InterPro" id="IPR004825">
    <property type="entry name" value="Insulin"/>
</dbReference>
<dbReference type="InterPro" id="IPR016179">
    <property type="entry name" value="Insulin-like"/>
</dbReference>
<dbReference type="InterPro" id="IPR036438">
    <property type="entry name" value="Insulin-like_sf"/>
</dbReference>
<dbReference type="InterPro" id="IPR022353">
    <property type="entry name" value="Insulin_CS"/>
</dbReference>
<dbReference type="InterPro" id="IPR022352">
    <property type="entry name" value="Insulin_family"/>
</dbReference>
<dbReference type="PANTHER" id="PTHR11454:SF9">
    <property type="entry name" value="INSULIN"/>
    <property type="match status" value="1"/>
</dbReference>
<dbReference type="PANTHER" id="PTHR11454">
    <property type="entry name" value="INSULIN/INSULIN GROWTH FACTOR"/>
    <property type="match status" value="1"/>
</dbReference>
<dbReference type="Pfam" id="PF00049">
    <property type="entry name" value="Insulin"/>
    <property type="match status" value="1"/>
</dbReference>
<dbReference type="PRINTS" id="PR00277">
    <property type="entry name" value="INSULIN"/>
</dbReference>
<dbReference type="PRINTS" id="PR00276">
    <property type="entry name" value="INSULINFAMLY"/>
</dbReference>
<dbReference type="SMART" id="SM00078">
    <property type="entry name" value="IlGF"/>
    <property type="match status" value="1"/>
</dbReference>
<dbReference type="SUPFAM" id="SSF56994">
    <property type="entry name" value="Insulin-like"/>
    <property type="match status" value="1"/>
</dbReference>
<dbReference type="PROSITE" id="PS00262">
    <property type="entry name" value="INSULIN"/>
    <property type="match status" value="1"/>
</dbReference>
<proteinExistence type="evidence at protein level"/>
<evidence type="ECO:0000305" key="1"/>